<comment type="similarity">
    <text evidence="1">Belongs to the universal ribosomal protein uS2 family.</text>
</comment>
<name>RS2_DESAH</name>
<gene>
    <name evidence="1" type="primary">rpsB</name>
    <name type="ordered locus">HRM2_17100</name>
</gene>
<dbReference type="EMBL" id="CP001087">
    <property type="protein sequence ID" value="ACN14816.1"/>
    <property type="molecule type" value="Genomic_DNA"/>
</dbReference>
<dbReference type="RefSeq" id="WP_015903603.1">
    <property type="nucleotide sequence ID" value="NC_012108.1"/>
</dbReference>
<dbReference type="SMR" id="C0QB17"/>
<dbReference type="STRING" id="177437.HRM2_17100"/>
<dbReference type="KEGG" id="dat:HRM2_17100"/>
<dbReference type="eggNOG" id="COG0052">
    <property type="taxonomic scope" value="Bacteria"/>
</dbReference>
<dbReference type="HOGENOM" id="CLU_040318_1_2_7"/>
<dbReference type="OrthoDB" id="9808036at2"/>
<dbReference type="Proteomes" id="UP000000442">
    <property type="component" value="Chromosome"/>
</dbReference>
<dbReference type="GO" id="GO:0022627">
    <property type="term" value="C:cytosolic small ribosomal subunit"/>
    <property type="evidence" value="ECO:0007669"/>
    <property type="project" value="TreeGrafter"/>
</dbReference>
<dbReference type="GO" id="GO:0003735">
    <property type="term" value="F:structural constituent of ribosome"/>
    <property type="evidence" value="ECO:0007669"/>
    <property type="project" value="InterPro"/>
</dbReference>
<dbReference type="GO" id="GO:0006412">
    <property type="term" value="P:translation"/>
    <property type="evidence" value="ECO:0007669"/>
    <property type="project" value="UniProtKB-UniRule"/>
</dbReference>
<dbReference type="CDD" id="cd01425">
    <property type="entry name" value="RPS2"/>
    <property type="match status" value="1"/>
</dbReference>
<dbReference type="FunFam" id="1.10.287.610:FF:000001">
    <property type="entry name" value="30S ribosomal protein S2"/>
    <property type="match status" value="1"/>
</dbReference>
<dbReference type="Gene3D" id="3.40.50.10490">
    <property type="entry name" value="Glucose-6-phosphate isomerase like protein, domain 1"/>
    <property type="match status" value="1"/>
</dbReference>
<dbReference type="Gene3D" id="1.10.287.610">
    <property type="entry name" value="Helix hairpin bin"/>
    <property type="match status" value="1"/>
</dbReference>
<dbReference type="HAMAP" id="MF_00291_B">
    <property type="entry name" value="Ribosomal_uS2_B"/>
    <property type="match status" value="1"/>
</dbReference>
<dbReference type="InterPro" id="IPR001865">
    <property type="entry name" value="Ribosomal_uS2"/>
</dbReference>
<dbReference type="InterPro" id="IPR005706">
    <property type="entry name" value="Ribosomal_uS2_bac/mit/plastid"/>
</dbReference>
<dbReference type="InterPro" id="IPR018130">
    <property type="entry name" value="Ribosomal_uS2_CS"/>
</dbReference>
<dbReference type="InterPro" id="IPR023591">
    <property type="entry name" value="Ribosomal_uS2_flav_dom_sf"/>
</dbReference>
<dbReference type="NCBIfam" id="TIGR01011">
    <property type="entry name" value="rpsB_bact"/>
    <property type="match status" value="1"/>
</dbReference>
<dbReference type="PANTHER" id="PTHR12534">
    <property type="entry name" value="30S RIBOSOMAL PROTEIN S2 PROKARYOTIC AND ORGANELLAR"/>
    <property type="match status" value="1"/>
</dbReference>
<dbReference type="PANTHER" id="PTHR12534:SF0">
    <property type="entry name" value="SMALL RIBOSOMAL SUBUNIT PROTEIN US2M"/>
    <property type="match status" value="1"/>
</dbReference>
<dbReference type="Pfam" id="PF00318">
    <property type="entry name" value="Ribosomal_S2"/>
    <property type="match status" value="1"/>
</dbReference>
<dbReference type="PRINTS" id="PR00395">
    <property type="entry name" value="RIBOSOMALS2"/>
</dbReference>
<dbReference type="SUPFAM" id="SSF52313">
    <property type="entry name" value="Ribosomal protein S2"/>
    <property type="match status" value="1"/>
</dbReference>
<dbReference type="PROSITE" id="PS00962">
    <property type="entry name" value="RIBOSOMAL_S2_1"/>
    <property type="match status" value="1"/>
</dbReference>
<dbReference type="PROSITE" id="PS00963">
    <property type="entry name" value="RIBOSOMAL_S2_2"/>
    <property type="match status" value="1"/>
</dbReference>
<organism>
    <name type="scientific">Desulforapulum autotrophicum (strain ATCC 43914 / DSM 3382 / VKM B-1955 / HRM2)</name>
    <name type="common">Desulfobacterium autotrophicum</name>
    <dbReference type="NCBI Taxonomy" id="177437"/>
    <lineage>
        <taxon>Bacteria</taxon>
        <taxon>Pseudomonadati</taxon>
        <taxon>Thermodesulfobacteriota</taxon>
        <taxon>Desulfobacteria</taxon>
        <taxon>Desulfobacterales</taxon>
        <taxon>Desulfobacteraceae</taxon>
        <taxon>Desulforapulum</taxon>
    </lineage>
</organism>
<evidence type="ECO:0000255" key="1">
    <source>
        <dbReference type="HAMAP-Rule" id="MF_00291"/>
    </source>
</evidence>
<evidence type="ECO:0000305" key="2"/>
<sequence length="280" mass="31341">MAYVTMRELLEAGVHFGHQTRRWNPKMKKYIFGARNGIYIVDLQQTVKMFRDAYDFITDVTAQGKSVLFVGTKKQARDSVYEEANRAETYYVQNRWLGGMLTNFQTIKKTISRFEFLSTIENDGTIEDYPKKERVKMAKERVKLEACIGGISKMKNLPGAIFVIDPKNESIAVKEGKRLGIPIVAVVDTNCDPDDIDYVIPGNDDAIRSIRLFASKIADAAIEGHQRYLEKQNAGSDKDMDEAAFGGSAPVAAAVERTIESDGSDGPVVEMIRRKTIPAE</sequence>
<feature type="chain" id="PRO_1000204880" description="Small ribosomal subunit protein uS2">
    <location>
        <begin position="1"/>
        <end position="280"/>
    </location>
</feature>
<reference key="1">
    <citation type="journal article" date="2009" name="Environ. Microbiol.">
        <title>Genome sequence of Desulfobacterium autotrophicum HRM2, a marine sulfate reducer oxidizing organic carbon completely to carbon dioxide.</title>
        <authorList>
            <person name="Strittmatter A.W."/>
            <person name="Liesegang H."/>
            <person name="Rabus R."/>
            <person name="Decker I."/>
            <person name="Amann J."/>
            <person name="Andres S."/>
            <person name="Henne A."/>
            <person name="Fricke W.F."/>
            <person name="Martinez-Arias R."/>
            <person name="Bartels D."/>
            <person name="Goesmann A."/>
            <person name="Krause L."/>
            <person name="Puehler A."/>
            <person name="Klenk H.P."/>
            <person name="Richter M."/>
            <person name="Schuler M."/>
            <person name="Gloeckner F.O."/>
            <person name="Meyerdierks A."/>
            <person name="Gottschalk G."/>
            <person name="Amann R."/>
        </authorList>
    </citation>
    <scope>NUCLEOTIDE SEQUENCE [LARGE SCALE GENOMIC DNA]</scope>
    <source>
        <strain>ATCC 43914 / DSM 3382 / VKM B-1955 / HRM2</strain>
    </source>
</reference>
<keyword id="KW-1185">Reference proteome</keyword>
<keyword id="KW-0687">Ribonucleoprotein</keyword>
<keyword id="KW-0689">Ribosomal protein</keyword>
<accession>C0QB17</accession>
<protein>
    <recommendedName>
        <fullName evidence="1">Small ribosomal subunit protein uS2</fullName>
    </recommendedName>
    <alternativeName>
        <fullName evidence="2">30S ribosomal protein S2</fullName>
    </alternativeName>
</protein>
<proteinExistence type="inferred from homology"/>